<feature type="chain" id="PRO_0000264841" description="DNA repair protein RecO">
    <location>
        <begin position="1"/>
        <end position="241"/>
    </location>
</feature>
<evidence type="ECO:0000255" key="1">
    <source>
        <dbReference type="HAMAP-Rule" id="MF_00201"/>
    </source>
</evidence>
<keyword id="KW-0227">DNA damage</keyword>
<keyword id="KW-0233">DNA recombination</keyword>
<keyword id="KW-0234">DNA repair</keyword>
<keyword id="KW-1185">Reference proteome</keyword>
<organism>
    <name type="scientific">Roseobacter denitrificans (strain ATCC 33942 / OCh 114)</name>
    <name type="common">Erythrobacter sp. (strain OCh 114)</name>
    <name type="synonym">Roseobacter denitrificans</name>
    <dbReference type="NCBI Taxonomy" id="375451"/>
    <lineage>
        <taxon>Bacteria</taxon>
        <taxon>Pseudomonadati</taxon>
        <taxon>Pseudomonadota</taxon>
        <taxon>Alphaproteobacteria</taxon>
        <taxon>Rhodobacterales</taxon>
        <taxon>Roseobacteraceae</taxon>
        <taxon>Roseobacter</taxon>
    </lineage>
</organism>
<sequence length="241" mass="26386">MEWREEGILLSTRRHGESAAIIEVFTPSHGRHAGVVRGGTSRKIAPILQPGAQLDLTWRARLEDHIGSFLVEPVRSRAAAAMGDRLALAGLNAVTALLGFCLPEREAHRPLYVETERLLDLLGEGEIWPLAYLRWEVQLLHDMGYALALEACAVTGQRDDLIYVSPKSGRAVSAKGAGDWADRLLPLPPILRGIGGGPDAEIAQAFITTGYFLTEHLARDLGGKPLPEARARFVETFSRRL</sequence>
<dbReference type="EMBL" id="CP000362">
    <property type="protein sequence ID" value="ABG31010.1"/>
    <property type="molecule type" value="Genomic_DNA"/>
</dbReference>
<dbReference type="RefSeq" id="WP_011567630.1">
    <property type="nucleotide sequence ID" value="NC_008209.1"/>
</dbReference>
<dbReference type="SMR" id="Q16AI3"/>
<dbReference type="STRING" id="375451.RD1_1369"/>
<dbReference type="KEGG" id="rde:RD1_1369"/>
<dbReference type="eggNOG" id="COG1381">
    <property type="taxonomic scope" value="Bacteria"/>
</dbReference>
<dbReference type="HOGENOM" id="CLU_086029_0_0_5"/>
<dbReference type="OrthoDB" id="9804792at2"/>
<dbReference type="Proteomes" id="UP000007029">
    <property type="component" value="Chromosome"/>
</dbReference>
<dbReference type="GO" id="GO:0043590">
    <property type="term" value="C:bacterial nucleoid"/>
    <property type="evidence" value="ECO:0007669"/>
    <property type="project" value="TreeGrafter"/>
</dbReference>
<dbReference type="GO" id="GO:0006310">
    <property type="term" value="P:DNA recombination"/>
    <property type="evidence" value="ECO:0007669"/>
    <property type="project" value="UniProtKB-UniRule"/>
</dbReference>
<dbReference type="GO" id="GO:0006302">
    <property type="term" value="P:double-strand break repair"/>
    <property type="evidence" value="ECO:0007669"/>
    <property type="project" value="TreeGrafter"/>
</dbReference>
<dbReference type="Gene3D" id="2.40.50.140">
    <property type="entry name" value="Nucleic acid-binding proteins"/>
    <property type="match status" value="1"/>
</dbReference>
<dbReference type="Gene3D" id="1.20.1440.120">
    <property type="entry name" value="Recombination protein O, C-terminal domain"/>
    <property type="match status" value="1"/>
</dbReference>
<dbReference type="HAMAP" id="MF_00201">
    <property type="entry name" value="RecO"/>
    <property type="match status" value="1"/>
</dbReference>
<dbReference type="InterPro" id="IPR037278">
    <property type="entry name" value="ARFGAP/RecO"/>
</dbReference>
<dbReference type="InterPro" id="IPR022572">
    <property type="entry name" value="DNA_rep/recomb_RecO_N"/>
</dbReference>
<dbReference type="InterPro" id="IPR012340">
    <property type="entry name" value="NA-bd_OB-fold"/>
</dbReference>
<dbReference type="InterPro" id="IPR003717">
    <property type="entry name" value="RecO"/>
</dbReference>
<dbReference type="InterPro" id="IPR042242">
    <property type="entry name" value="RecO_C"/>
</dbReference>
<dbReference type="NCBIfam" id="TIGR00613">
    <property type="entry name" value="reco"/>
    <property type="match status" value="1"/>
</dbReference>
<dbReference type="PANTHER" id="PTHR33991">
    <property type="entry name" value="DNA REPAIR PROTEIN RECO"/>
    <property type="match status" value="1"/>
</dbReference>
<dbReference type="PANTHER" id="PTHR33991:SF1">
    <property type="entry name" value="DNA REPAIR PROTEIN RECO"/>
    <property type="match status" value="1"/>
</dbReference>
<dbReference type="Pfam" id="PF02565">
    <property type="entry name" value="RecO_C"/>
    <property type="match status" value="1"/>
</dbReference>
<dbReference type="Pfam" id="PF11967">
    <property type="entry name" value="RecO_N"/>
    <property type="match status" value="1"/>
</dbReference>
<dbReference type="SUPFAM" id="SSF57863">
    <property type="entry name" value="ArfGap/RecO-like zinc finger"/>
    <property type="match status" value="1"/>
</dbReference>
<dbReference type="SUPFAM" id="SSF50249">
    <property type="entry name" value="Nucleic acid-binding proteins"/>
    <property type="match status" value="1"/>
</dbReference>
<proteinExistence type="inferred from homology"/>
<comment type="function">
    <text evidence="1">Involved in DNA repair and RecF pathway recombination.</text>
</comment>
<comment type="similarity">
    <text evidence="1">Belongs to the RecO family.</text>
</comment>
<protein>
    <recommendedName>
        <fullName evidence="1">DNA repair protein RecO</fullName>
    </recommendedName>
    <alternativeName>
        <fullName evidence="1">Recombination protein O</fullName>
    </alternativeName>
</protein>
<accession>Q16AI3</accession>
<gene>
    <name evidence="1" type="primary">recO</name>
    <name type="ordered locus">RD1_1369</name>
</gene>
<name>RECO_ROSDO</name>
<reference key="1">
    <citation type="journal article" date="2007" name="J. Bacteriol.">
        <title>The complete genome sequence of Roseobacter denitrificans reveals a mixotrophic rather than photosynthetic metabolism.</title>
        <authorList>
            <person name="Swingley W.D."/>
            <person name="Sadekar S."/>
            <person name="Mastrian S.D."/>
            <person name="Matthies H.J."/>
            <person name="Hao J."/>
            <person name="Ramos H."/>
            <person name="Acharya C.R."/>
            <person name="Conrad A.L."/>
            <person name="Taylor H.L."/>
            <person name="Dejesa L.C."/>
            <person name="Shah M.K."/>
            <person name="O'Huallachain M.E."/>
            <person name="Lince M.T."/>
            <person name="Blankenship R.E."/>
            <person name="Beatty J.T."/>
            <person name="Touchman J.W."/>
        </authorList>
    </citation>
    <scope>NUCLEOTIDE SEQUENCE [LARGE SCALE GENOMIC DNA]</scope>
    <source>
        <strain>ATCC 33942 / OCh 114</strain>
    </source>
</reference>